<dbReference type="EMBL" id="AK050100">
    <property type="protein sequence ID" value="BAC34066.1"/>
    <property type="molecule type" value="mRNA"/>
</dbReference>
<dbReference type="EMBL" id="AK140526">
    <property type="protein sequence ID" value="BAE24415.1"/>
    <property type="molecule type" value="mRNA"/>
</dbReference>
<dbReference type="EMBL" id="BC094238">
    <property type="protein sequence ID" value="AAH94238.1"/>
    <property type="molecule type" value="mRNA"/>
</dbReference>
<dbReference type="CCDS" id="CCDS22597.1"/>
<dbReference type="RefSeq" id="NP_808456.1">
    <property type="nucleotide sequence ID" value="NM_177788.4"/>
</dbReference>
<dbReference type="RefSeq" id="XP_006531133.1">
    <property type="nucleotide sequence ID" value="XM_006531070.3"/>
</dbReference>
<dbReference type="SMR" id="Q8BI71"/>
<dbReference type="FunCoup" id="Q8BI71">
    <property type="interactions" value="149"/>
</dbReference>
<dbReference type="STRING" id="10090.ENSMUSP00000053766"/>
<dbReference type="GlyGen" id="Q8BI71">
    <property type="glycosylation" value="1 site"/>
</dbReference>
<dbReference type="iPTMnet" id="Q8BI71"/>
<dbReference type="PhosphoSitePlus" id="Q8BI71"/>
<dbReference type="SwissPalm" id="Q8BI71"/>
<dbReference type="PaxDb" id="10090-ENSMUSP00000053766"/>
<dbReference type="ProteomicsDB" id="271510"/>
<dbReference type="Antibodypedia" id="29440">
    <property type="antibodies" value="67 antibodies from 16 providers"/>
</dbReference>
<dbReference type="DNASU" id="277978"/>
<dbReference type="Ensembl" id="ENSMUST00000057855.4">
    <property type="protein sequence ID" value="ENSMUSP00000053766.4"/>
    <property type="gene ID" value="ENSMUSG00000043251.7"/>
</dbReference>
<dbReference type="GeneID" id="277978"/>
<dbReference type="KEGG" id="mmu:277978"/>
<dbReference type="UCSC" id="uc009nci.1">
    <property type="organism name" value="mouse"/>
</dbReference>
<dbReference type="AGR" id="MGI:3041195"/>
<dbReference type="CTD" id="277978"/>
<dbReference type="MGI" id="MGI:3041195">
    <property type="gene designation" value="Exoc3l"/>
</dbReference>
<dbReference type="VEuPathDB" id="HostDB:ENSMUSG00000043251"/>
<dbReference type="eggNOG" id="KOG2286">
    <property type="taxonomic scope" value="Eukaryota"/>
</dbReference>
<dbReference type="GeneTree" id="ENSGT01030000234613"/>
<dbReference type="HOGENOM" id="CLU_016260_3_0_1"/>
<dbReference type="InParanoid" id="Q8BI71"/>
<dbReference type="OMA" id="REQEPNT"/>
<dbReference type="OrthoDB" id="10047020at2759"/>
<dbReference type="PhylomeDB" id="Q8BI71"/>
<dbReference type="TreeFam" id="TF314979"/>
<dbReference type="BioGRID-ORCS" id="277978">
    <property type="hits" value="4 hits in 77 CRISPR screens"/>
</dbReference>
<dbReference type="ChiTaRS" id="Exoc3l">
    <property type="organism name" value="mouse"/>
</dbReference>
<dbReference type="PRO" id="PR:Q8BI71"/>
<dbReference type="Proteomes" id="UP000000589">
    <property type="component" value="Chromosome 8"/>
</dbReference>
<dbReference type="RNAct" id="Q8BI71">
    <property type="molecule type" value="protein"/>
</dbReference>
<dbReference type="Bgee" id="ENSMUSG00000043251">
    <property type="expression patterns" value="Expressed in yolk sac and 73 other cell types or tissues"/>
</dbReference>
<dbReference type="ExpressionAtlas" id="Q8BI71">
    <property type="expression patterns" value="baseline and differential"/>
</dbReference>
<dbReference type="GO" id="GO:0000145">
    <property type="term" value="C:exocyst"/>
    <property type="evidence" value="ECO:0000314"/>
    <property type="project" value="UniProtKB"/>
</dbReference>
<dbReference type="GO" id="GO:0030141">
    <property type="term" value="C:secretory granule"/>
    <property type="evidence" value="ECO:0000314"/>
    <property type="project" value="UniProtKB"/>
</dbReference>
<dbReference type="GO" id="GO:0030133">
    <property type="term" value="C:transport vesicle"/>
    <property type="evidence" value="ECO:0007669"/>
    <property type="project" value="UniProtKB-SubCell"/>
</dbReference>
<dbReference type="GO" id="GO:0006887">
    <property type="term" value="P:exocytosis"/>
    <property type="evidence" value="ECO:0000314"/>
    <property type="project" value="UniProtKB"/>
</dbReference>
<dbReference type="GO" id="GO:0030072">
    <property type="term" value="P:peptide hormone secretion"/>
    <property type="evidence" value="ECO:0000314"/>
    <property type="project" value="UniProtKB"/>
</dbReference>
<dbReference type="FunFam" id="1.10.357.70:FF:000001">
    <property type="entry name" value="Exocyst complex component 3"/>
    <property type="match status" value="1"/>
</dbReference>
<dbReference type="FunFam" id="1.10.357.50:FF:000009">
    <property type="entry name" value="Exocyst complex component 3-like 1"/>
    <property type="match status" value="1"/>
</dbReference>
<dbReference type="Gene3D" id="1.10.357.50">
    <property type="match status" value="1"/>
</dbReference>
<dbReference type="Gene3D" id="1.10.357.70">
    <property type="entry name" value="Exocyst complex component Sec6, C-terminal domain"/>
    <property type="match status" value="1"/>
</dbReference>
<dbReference type="InterPro" id="IPR010326">
    <property type="entry name" value="EXOC3/Sec6"/>
</dbReference>
<dbReference type="InterPro" id="IPR042532">
    <property type="entry name" value="EXOC3/Sec6_C"/>
</dbReference>
<dbReference type="PANTHER" id="PTHR21292:SF12">
    <property type="entry name" value="EXOCYST COMPLEX COMPONENT 3-LIKE PROTEIN"/>
    <property type="match status" value="1"/>
</dbReference>
<dbReference type="PANTHER" id="PTHR21292">
    <property type="entry name" value="EXOCYST COMPLEX COMPONENT SEC6-RELATED"/>
    <property type="match status" value="1"/>
</dbReference>
<dbReference type="Pfam" id="PF06046">
    <property type="entry name" value="Sec6"/>
    <property type="match status" value="1"/>
</dbReference>
<keyword id="KW-0968">Cytoplasmic vesicle</keyword>
<keyword id="KW-0268">Exocytosis</keyword>
<keyword id="KW-1185">Reference proteome</keyword>
<comment type="function">
    <text evidence="2">As part of the exocyst, may play a role in regulated exocytosis of insulin granules.</text>
</comment>
<comment type="subunit">
    <text evidence="2">Interacts with EXOC2, EXOC4 and EXOC5; may be part of the exocyst.</text>
</comment>
<comment type="subcellular location">
    <subcellularLocation>
        <location evidence="2">Cytoplasmic vesicle</location>
        <location evidence="2">Secretory vesicle</location>
    </subcellularLocation>
    <text>Colocalizes with insulin granules.</text>
</comment>
<comment type="tissue specificity">
    <text evidence="2">Ubiquitously expressed.</text>
</comment>
<comment type="similarity">
    <text evidence="3">Belongs to the SEC6 family.</text>
</comment>
<sequence>MDSKIQPTLRPGSSCPRPEWPEQERAEQLARGAALKWASGIFYRPEQLTRLGQYRSREIQRNYSLEARIKSVVQSYLEGVQTGVWQLTRALEAVQGTREALSQAHHLLKGLSRTSQTLEPLRECVVQHKQLQILTRLLPRLQAVPATVAHTQTLIDSERLLEAYVSLRELEQLKEETLAPLGGLELPIFQGLGLLAEALGQAVEAAAGAAGRLAREDPALLVAAIRVAEVETERTILGQAPRDWRQRCLRALQEGLERVHFASPVLPEPGALAGWLEALQVALPAELATAEALVAPCCPPSYRVVELWAHTLHSGLRRSVQQLLAGPELGAADTFALLHWALHVYTGKEMMGNLELGPEADVSQLEPLLTSENIEQLEAAFVAQVQVSVAQWLKKALDGEVAEWSGEQEPPTDPSGFYHSPMPAIVLQILAENIQVTNLISDSLHRRAHNMAVSELGAFLRSFSDALIRFSRDHLRGDAVAPHYVPYLLSAFNHQSALRSSVSVLLPDGEASGVLAPVEAALDDVQRRICRLVLEVLQVELQPLFSALPSRRWLLSSELLDGVCEQTSHFCQDFWRVRKPGVQLLLAEAERTVVLQYLRALMQGRLVCRGTDERSQAAERLRQDAAQLKELFLGLGLEESAHCAPVLLALRELLNLHDPTLLGLEVAGLRQQFPDVSEDHVSALLDLRGDVSREHRQAALSSLQAGPPPSPSTGRRALFSLVPTPTPSLSSCLPSGPCS</sequence>
<accession>Q8BI71</accession>
<accession>Q3USB8</accession>
<gene>
    <name type="primary">Exoc3l1</name>
    <name type="synonym">Exoc3l</name>
</gene>
<evidence type="ECO:0000256" key="1">
    <source>
        <dbReference type="SAM" id="MobiDB-lite"/>
    </source>
</evidence>
<evidence type="ECO:0000269" key="2">
    <source>
    </source>
</evidence>
<evidence type="ECO:0000305" key="3"/>
<name>EX3L1_MOUSE</name>
<organism>
    <name type="scientific">Mus musculus</name>
    <name type="common">Mouse</name>
    <dbReference type="NCBI Taxonomy" id="10090"/>
    <lineage>
        <taxon>Eukaryota</taxon>
        <taxon>Metazoa</taxon>
        <taxon>Chordata</taxon>
        <taxon>Craniata</taxon>
        <taxon>Vertebrata</taxon>
        <taxon>Euteleostomi</taxon>
        <taxon>Mammalia</taxon>
        <taxon>Eutheria</taxon>
        <taxon>Euarchontoglires</taxon>
        <taxon>Glires</taxon>
        <taxon>Rodentia</taxon>
        <taxon>Myomorpha</taxon>
        <taxon>Muroidea</taxon>
        <taxon>Muridae</taxon>
        <taxon>Murinae</taxon>
        <taxon>Mus</taxon>
        <taxon>Mus</taxon>
    </lineage>
</organism>
<feature type="chain" id="PRO_0000309475" description="Exocyst complex component 3-like protein">
    <location>
        <begin position="1"/>
        <end position="739"/>
    </location>
</feature>
<feature type="region of interest" description="Mediates interaction with EXOC2, EXOC4 and EXOC5" evidence="2">
    <location>
        <begin position="1"/>
        <end position="370"/>
    </location>
</feature>
<feature type="region of interest" description="Disordered" evidence="1">
    <location>
        <begin position="1"/>
        <end position="21"/>
    </location>
</feature>
<feature type="region of interest" description="Disordered" evidence="1">
    <location>
        <begin position="698"/>
        <end position="718"/>
    </location>
</feature>
<proteinExistence type="evidence at protein level"/>
<protein>
    <recommendedName>
        <fullName>Exocyst complex component 3-like protein</fullName>
    </recommendedName>
</protein>
<reference key="1">
    <citation type="journal article" date="2005" name="Science">
        <title>The transcriptional landscape of the mammalian genome.</title>
        <authorList>
            <person name="Carninci P."/>
            <person name="Kasukawa T."/>
            <person name="Katayama S."/>
            <person name="Gough J."/>
            <person name="Frith M.C."/>
            <person name="Maeda N."/>
            <person name="Oyama R."/>
            <person name="Ravasi T."/>
            <person name="Lenhard B."/>
            <person name="Wells C."/>
            <person name="Kodzius R."/>
            <person name="Shimokawa K."/>
            <person name="Bajic V.B."/>
            <person name="Brenner S.E."/>
            <person name="Batalov S."/>
            <person name="Forrest A.R."/>
            <person name="Zavolan M."/>
            <person name="Davis M.J."/>
            <person name="Wilming L.G."/>
            <person name="Aidinis V."/>
            <person name="Allen J.E."/>
            <person name="Ambesi-Impiombato A."/>
            <person name="Apweiler R."/>
            <person name="Aturaliya R.N."/>
            <person name="Bailey T.L."/>
            <person name="Bansal M."/>
            <person name="Baxter L."/>
            <person name="Beisel K.W."/>
            <person name="Bersano T."/>
            <person name="Bono H."/>
            <person name="Chalk A.M."/>
            <person name="Chiu K.P."/>
            <person name="Choudhary V."/>
            <person name="Christoffels A."/>
            <person name="Clutterbuck D.R."/>
            <person name="Crowe M.L."/>
            <person name="Dalla E."/>
            <person name="Dalrymple B.P."/>
            <person name="de Bono B."/>
            <person name="Della Gatta G."/>
            <person name="di Bernardo D."/>
            <person name="Down T."/>
            <person name="Engstrom P."/>
            <person name="Fagiolini M."/>
            <person name="Faulkner G."/>
            <person name="Fletcher C.F."/>
            <person name="Fukushima T."/>
            <person name="Furuno M."/>
            <person name="Futaki S."/>
            <person name="Gariboldi M."/>
            <person name="Georgii-Hemming P."/>
            <person name="Gingeras T.R."/>
            <person name="Gojobori T."/>
            <person name="Green R.E."/>
            <person name="Gustincich S."/>
            <person name="Harbers M."/>
            <person name="Hayashi Y."/>
            <person name="Hensch T.K."/>
            <person name="Hirokawa N."/>
            <person name="Hill D."/>
            <person name="Huminiecki L."/>
            <person name="Iacono M."/>
            <person name="Ikeo K."/>
            <person name="Iwama A."/>
            <person name="Ishikawa T."/>
            <person name="Jakt M."/>
            <person name="Kanapin A."/>
            <person name="Katoh M."/>
            <person name="Kawasawa Y."/>
            <person name="Kelso J."/>
            <person name="Kitamura H."/>
            <person name="Kitano H."/>
            <person name="Kollias G."/>
            <person name="Krishnan S.P."/>
            <person name="Kruger A."/>
            <person name="Kummerfeld S.K."/>
            <person name="Kurochkin I.V."/>
            <person name="Lareau L.F."/>
            <person name="Lazarevic D."/>
            <person name="Lipovich L."/>
            <person name="Liu J."/>
            <person name="Liuni S."/>
            <person name="McWilliam S."/>
            <person name="Madan Babu M."/>
            <person name="Madera M."/>
            <person name="Marchionni L."/>
            <person name="Matsuda H."/>
            <person name="Matsuzawa S."/>
            <person name="Miki H."/>
            <person name="Mignone F."/>
            <person name="Miyake S."/>
            <person name="Morris K."/>
            <person name="Mottagui-Tabar S."/>
            <person name="Mulder N."/>
            <person name="Nakano N."/>
            <person name="Nakauchi H."/>
            <person name="Ng P."/>
            <person name="Nilsson R."/>
            <person name="Nishiguchi S."/>
            <person name="Nishikawa S."/>
            <person name="Nori F."/>
            <person name="Ohara O."/>
            <person name="Okazaki Y."/>
            <person name="Orlando V."/>
            <person name="Pang K.C."/>
            <person name="Pavan W.J."/>
            <person name="Pavesi G."/>
            <person name="Pesole G."/>
            <person name="Petrovsky N."/>
            <person name="Piazza S."/>
            <person name="Reed J."/>
            <person name="Reid J.F."/>
            <person name="Ring B.Z."/>
            <person name="Ringwald M."/>
            <person name="Rost B."/>
            <person name="Ruan Y."/>
            <person name="Salzberg S.L."/>
            <person name="Sandelin A."/>
            <person name="Schneider C."/>
            <person name="Schoenbach C."/>
            <person name="Sekiguchi K."/>
            <person name="Semple C.A."/>
            <person name="Seno S."/>
            <person name="Sessa L."/>
            <person name="Sheng Y."/>
            <person name="Shibata Y."/>
            <person name="Shimada H."/>
            <person name="Shimada K."/>
            <person name="Silva D."/>
            <person name="Sinclair B."/>
            <person name="Sperling S."/>
            <person name="Stupka E."/>
            <person name="Sugiura K."/>
            <person name="Sultana R."/>
            <person name="Takenaka Y."/>
            <person name="Taki K."/>
            <person name="Tammoja K."/>
            <person name="Tan S.L."/>
            <person name="Tang S."/>
            <person name="Taylor M.S."/>
            <person name="Tegner J."/>
            <person name="Teichmann S.A."/>
            <person name="Ueda H.R."/>
            <person name="van Nimwegen E."/>
            <person name="Verardo R."/>
            <person name="Wei C.L."/>
            <person name="Yagi K."/>
            <person name="Yamanishi H."/>
            <person name="Zabarovsky E."/>
            <person name="Zhu S."/>
            <person name="Zimmer A."/>
            <person name="Hide W."/>
            <person name="Bult C."/>
            <person name="Grimmond S.M."/>
            <person name="Teasdale R.D."/>
            <person name="Liu E.T."/>
            <person name="Brusic V."/>
            <person name="Quackenbush J."/>
            <person name="Wahlestedt C."/>
            <person name="Mattick J.S."/>
            <person name="Hume D.A."/>
            <person name="Kai C."/>
            <person name="Sasaki D."/>
            <person name="Tomaru Y."/>
            <person name="Fukuda S."/>
            <person name="Kanamori-Katayama M."/>
            <person name="Suzuki M."/>
            <person name="Aoki J."/>
            <person name="Arakawa T."/>
            <person name="Iida J."/>
            <person name="Imamura K."/>
            <person name="Itoh M."/>
            <person name="Kato T."/>
            <person name="Kawaji H."/>
            <person name="Kawagashira N."/>
            <person name="Kawashima T."/>
            <person name="Kojima M."/>
            <person name="Kondo S."/>
            <person name="Konno H."/>
            <person name="Nakano K."/>
            <person name="Ninomiya N."/>
            <person name="Nishio T."/>
            <person name="Okada M."/>
            <person name="Plessy C."/>
            <person name="Shibata K."/>
            <person name="Shiraki T."/>
            <person name="Suzuki S."/>
            <person name="Tagami M."/>
            <person name="Waki K."/>
            <person name="Watahiki A."/>
            <person name="Okamura-Oho Y."/>
            <person name="Suzuki H."/>
            <person name="Kawai J."/>
            <person name="Hayashizaki Y."/>
        </authorList>
    </citation>
    <scope>NUCLEOTIDE SEQUENCE [LARGE SCALE MRNA]</scope>
    <source>
        <strain>C57BL/6J</strain>
        <tissue>Cerebellum</tissue>
        <tissue>Liver</tissue>
    </source>
</reference>
<reference key="2">
    <citation type="journal article" date="2004" name="Genome Res.">
        <title>The status, quality, and expansion of the NIH full-length cDNA project: the Mammalian Gene Collection (MGC).</title>
        <authorList>
            <consortium name="The MGC Project Team"/>
        </authorList>
    </citation>
    <scope>NUCLEOTIDE SEQUENCE [LARGE SCALE MRNA]</scope>
    <source>
        <strain>C57BL/6J</strain>
        <tissue>Eye</tissue>
    </source>
</reference>
<reference key="3">
    <citation type="journal article" date="2008" name="Biomed. Res.">
        <title>Involvement of Exoc3l, a protein structurally related to the exocyst subunit Sec6, in insulin secretion.</title>
        <authorList>
            <person name="Saito T."/>
            <person name="Shibasaki T."/>
            <person name="Seino S."/>
        </authorList>
    </citation>
    <scope>FUNCTION</scope>
    <scope>SUBCELLULAR LOCATION</scope>
    <scope>INTERACTION WITH EXOC2; EXOC4 AND EXOC5</scope>
    <scope>TISSUE SPECIFICITY</scope>
</reference>
<reference key="4">
    <citation type="journal article" date="2010" name="Cell">
        <title>A tissue-specific atlas of mouse protein phosphorylation and expression.</title>
        <authorList>
            <person name="Huttlin E.L."/>
            <person name="Jedrychowski M.P."/>
            <person name="Elias J.E."/>
            <person name="Goswami T."/>
            <person name="Rad R."/>
            <person name="Beausoleil S.A."/>
            <person name="Villen J."/>
            <person name="Haas W."/>
            <person name="Sowa M.E."/>
            <person name="Gygi S.P."/>
        </authorList>
    </citation>
    <scope>IDENTIFICATION BY MASS SPECTROMETRY [LARGE SCALE ANALYSIS]</scope>
    <source>
        <tissue>Testis</tissue>
    </source>
</reference>